<proteinExistence type="inferred from homology"/>
<feature type="chain" id="PRO_0000137752" description="Argininosuccinate lyase">
    <location>
        <begin position="1"/>
        <end position="469"/>
    </location>
</feature>
<sequence length="469" mass="51328">MTSQLHKKGEAWSARFSEPMSELVKRYTSSVFFDKRLALVDIAGSLAHANMLAAQKIISADDLAAIERGMAQIKGEIERGEFEWQLDLEDVHLNIEARLTALIGDAGKRLHTGRSRNDQVATDIRLWLRGEIDRIGGLLNDLRGALIDLAEQNADTIMPGFTHLQVAQPVTFGHHLLAYVEMFSRDAERMRDCRTRVNRLPLGAAALAGTSYPIDRHAVAKSLGFDGICANSLDAVSDRDFAIEFTAAAALVMTHVSRFSEELVLWMSPRVGFIDIADRFCTGSSIMPQKKNPDVPELARGKTGRVNGHLMALLTLMKGQPLAYNKDNQEDKEPLFDTVDTVADTLRIFAEMVAGITVKPDAMRAAALQGFSTATDLADYLVKRGLPFRDAHEAVAHAVKICDDRGIDLADLTLDEMKRELPNVAQLIGDDVFDYLTLEGSVASRNHPGGTAPDQVRAAAQAARAALGK</sequence>
<comment type="catalytic activity">
    <reaction evidence="1">
        <text>2-(N(omega)-L-arginino)succinate = fumarate + L-arginine</text>
        <dbReference type="Rhea" id="RHEA:24020"/>
        <dbReference type="ChEBI" id="CHEBI:29806"/>
        <dbReference type="ChEBI" id="CHEBI:32682"/>
        <dbReference type="ChEBI" id="CHEBI:57472"/>
        <dbReference type="EC" id="4.3.2.1"/>
    </reaction>
</comment>
<comment type="pathway">
    <text evidence="1">Amino-acid biosynthesis; L-arginine biosynthesis; L-arginine from L-ornithine and carbamoyl phosphate: step 3/3.</text>
</comment>
<comment type="subcellular location">
    <subcellularLocation>
        <location evidence="1">Cytoplasm</location>
    </subcellularLocation>
</comment>
<comment type="similarity">
    <text evidence="1">Belongs to the lyase 1 family. Argininosuccinate lyase subfamily.</text>
</comment>
<comment type="sequence caution" evidence="2">
    <conflict type="erroneous initiation">
        <sequence resource="EMBL-CDS" id="ABX14559"/>
    </conflict>
</comment>
<protein>
    <recommendedName>
        <fullName evidence="1">Argininosuccinate lyase</fullName>
        <shortName evidence="1">ASAL</shortName>
        <ecNumber evidence="1">4.3.2.1</ecNumber>
    </recommendedName>
    <alternativeName>
        <fullName evidence="1">Arginosuccinase</fullName>
    </alternativeName>
</protein>
<dbReference type="EC" id="4.3.2.1" evidence="1"/>
<dbReference type="EMBL" id="AB091437">
    <property type="protein sequence ID" value="BAC65282.1"/>
    <property type="molecule type" value="Genomic_DNA"/>
</dbReference>
<dbReference type="EMBL" id="CP000868">
    <property type="protein sequence ID" value="ABX14559.1"/>
    <property type="status" value="ALT_INIT"/>
    <property type="molecule type" value="Genomic_DNA"/>
</dbReference>
<dbReference type="EMBL" id="AP009385">
    <property type="protein sequence ID" value="BAG44287.1"/>
    <property type="molecule type" value="Genomic_DNA"/>
</dbReference>
<dbReference type="RefSeq" id="WP_006415883.1">
    <property type="nucleotide sequence ID" value="NC_010084.1"/>
</dbReference>
<dbReference type="SMR" id="P59615"/>
<dbReference type="STRING" id="395019.BMULJ_02393"/>
<dbReference type="GeneID" id="89570947"/>
<dbReference type="KEGG" id="bmj:BMULJ_02393"/>
<dbReference type="KEGG" id="bmu:Bmul_0865"/>
<dbReference type="eggNOG" id="COG0165">
    <property type="taxonomic scope" value="Bacteria"/>
</dbReference>
<dbReference type="HOGENOM" id="CLU_027272_2_3_4"/>
<dbReference type="UniPathway" id="UPA00068">
    <property type="reaction ID" value="UER00114"/>
</dbReference>
<dbReference type="Proteomes" id="UP000008815">
    <property type="component" value="Chromosome 1"/>
</dbReference>
<dbReference type="GO" id="GO:0005829">
    <property type="term" value="C:cytosol"/>
    <property type="evidence" value="ECO:0007669"/>
    <property type="project" value="TreeGrafter"/>
</dbReference>
<dbReference type="GO" id="GO:0004056">
    <property type="term" value="F:argininosuccinate lyase activity"/>
    <property type="evidence" value="ECO:0007669"/>
    <property type="project" value="UniProtKB-UniRule"/>
</dbReference>
<dbReference type="GO" id="GO:0042450">
    <property type="term" value="P:arginine biosynthetic process via ornithine"/>
    <property type="evidence" value="ECO:0007669"/>
    <property type="project" value="InterPro"/>
</dbReference>
<dbReference type="GO" id="GO:0006526">
    <property type="term" value="P:L-arginine biosynthetic process"/>
    <property type="evidence" value="ECO:0007669"/>
    <property type="project" value="UniProtKB-UniRule"/>
</dbReference>
<dbReference type="CDD" id="cd01359">
    <property type="entry name" value="Argininosuccinate_lyase"/>
    <property type="match status" value="1"/>
</dbReference>
<dbReference type="FunFam" id="1.10.275.10:FF:000002">
    <property type="entry name" value="Argininosuccinate lyase"/>
    <property type="match status" value="1"/>
</dbReference>
<dbReference type="FunFam" id="1.10.40.30:FF:000001">
    <property type="entry name" value="Argininosuccinate lyase"/>
    <property type="match status" value="1"/>
</dbReference>
<dbReference type="FunFam" id="1.20.200.10:FF:000015">
    <property type="entry name" value="argininosuccinate lyase isoform X2"/>
    <property type="match status" value="1"/>
</dbReference>
<dbReference type="Gene3D" id="1.10.40.30">
    <property type="entry name" value="Fumarase/aspartase (C-terminal domain)"/>
    <property type="match status" value="1"/>
</dbReference>
<dbReference type="Gene3D" id="1.20.200.10">
    <property type="entry name" value="Fumarase/aspartase (Central domain)"/>
    <property type="match status" value="1"/>
</dbReference>
<dbReference type="Gene3D" id="1.10.275.10">
    <property type="entry name" value="Fumarase/aspartase (N-terminal domain)"/>
    <property type="match status" value="1"/>
</dbReference>
<dbReference type="HAMAP" id="MF_00006">
    <property type="entry name" value="Arg_succ_lyase"/>
    <property type="match status" value="1"/>
</dbReference>
<dbReference type="InterPro" id="IPR029419">
    <property type="entry name" value="Arg_succ_lyase_C"/>
</dbReference>
<dbReference type="InterPro" id="IPR009049">
    <property type="entry name" value="Argininosuccinate_lyase"/>
</dbReference>
<dbReference type="InterPro" id="IPR024083">
    <property type="entry name" value="Fumarase/histidase_N"/>
</dbReference>
<dbReference type="InterPro" id="IPR020557">
    <property type="entry name" value="Fumarate_lyase_CS"/>
</dbReference>
<dbReference type="InterPro" id="IPR000362">
    <property type="entry name" value="Fumarate_lyase_fam"/>
</dbReference>
<dbReference type="InterPro" id="IPR022761">
    <property type="entry name" value="Fumarate_lyase_N"/>
</dbReference>
<dbReference type="InterPro" id="IPR008948">
    <property type="entry name" value="L-Aspartase-like"/>
</dbReference>
<dbReference type="NCBIfam" id="TIGR00838">
    <property type="entry name" value="argH"/>
    <property type="match status" value="1"/>
</dbReference>
<dbReference type="PANTHER" id="PTHR43814">
    <property type="entry name" value="ARGININOSUCCINATE LYASE"/>
    <property type="match status" value="1"/>
</dbReference>
<dbReference type="PANTHER" id="PTHR43814:SF1">
    <property type="entry name" value="ARGININOSUCCINATE LYASE"/>
    <property type="match status" value="1"/>
</dbReference>
<dbReference type="Pfam" id="PF14698">
    <property type="entry name" value="ASL_C2"/>
    <property type="match status" value="1"/>
</dbReference>
<dbReference type="Pfam" id="PF00206">
    <property type="entry name" value="Lyase_1"/>
    <property type="match status" value="1"/>
</dbReference>
<dbReference type="PRINTS" id="PR00145">
    <property type="entry name" value="ARGSUCLYASE"/>
</dbReference>
<dbReference type="PRINTS" id="PR00149">
    <property type="entry name" value="FUMRATELYASE"/>
</dbReference>
<dbReference type="SUPFAM" id="SSF48557">
    <property type="entry name" value="L-aspartase-like"/>
    <property type="match status" value="1"/>
</dbReference>
<dbReference type="PROSITE" id="PS00163">
    <property type="entry name" value="FUMARATE_LYASES"/>
    <property type="match status" value="1"/>
</dbReference>
<keyword id="KW-0028">Amino-acid biosynthesis</keyword>
<keyword id="KW-0055">Arginine biosynthesis</keyword>
<keyword id="KW-0963">Cytoplasm</keyword>
<keyword id="KW-0456">Lyase</keyword>
<keyword id="KW-1185">Reference proteome</keyword>
<organism>
    <name type="scientific">Burkholderia multivorans (strain ATCC 17616 / 249)</name>
    <dbReference type="NCBI Taxonomy" id="395019"/>
    <lineage>
        <taxon>Bacteria</taxon>
        <taxon>Pseudomonadati</taxon>
        <taxon>Pseudomonadota</taxon>
        <taxon>Betaproteobacteria</taxon>
        <taxon>Burkholderiales</taxon>
        <taxon>Burkholderiaceae</taxon>
        <taxon>Burkholderia</taxon>
        <taxon>Burkholderia cepacia complex</taxon>
    </lineage>
</organism>
<evidence type="ECO:0000255" key="1">
    <source>
        <dbReference type="HAMAP-Rule" id="MF_00006"/>
    </source>
</evidence>
<evidence type="ECO:0000305" key="2"/>
<gene>
    <name evidence="1" type="primary">argH</name>
    <name type="ordered locus">Bmul_0865</name>
    <name type="ordered locus">BMULJ_02393</name>
</gene>
<reference key="1">
    <citation type="journal article" date="2003" name="J. Bacteriol.">
        <title>Distribution and organization of auxotrophic genes on the multichromosomal genome of Burkholderia multivorans ATCC 17616.</title>
        <authorList>
            <person name="Komatsu H."/>
            <person name="Imura Y."/>
            <person name="Ohori A."/>
            <person name="Nagata Y."/>
            <person name="Tsuda M."/>
        </authorList>
    </citation>
    <scope>NUCLEOTIDE SEQUENCE [GENOMIC DNA]</scope>
</reference>
<reference key="2">
    <citation type="submission" date="2007-10" db="EMBL/GenBank/DDBJ databases">
        <title>Complete sequence of chromosome 1 of Burkholderia multivorans ATCC 17616.</title>
        <authorList>
            <person name="Copeland A."/>
            <person name="Lucas S."/>
            <person name="Lapidus A."/>
            <person name="Barry K."/>
            <person name="Glavina del Rio T."/>
            <person name="Dalin E."/>
            <person name="Tice H."/>
            <person name="Pitluck S."/>
            <person name="Chain P."/>
            <person name="Malfatti S."/>
            <person name="Shin M."/>
            <person name="Vergez L."/>
            <person name="Schmutz J."/>
            <person name="Larimer F."/>
            <person name="Land M."/>
            <person name="Hauser L."/>
            <person name="Kyrpides N."/>
            <person name="Kim E."/>
            <person name="Tiedje J."/>
            <person name="Richardson P."/>
        </authorList>
    </citation>
    <scope>NUCLEOTIDE SEQUENCE [LARGE SCALE GENOMIC DNA]</scope>
    <source>
        <strain>ATCC 17616 / 249</strain>
    </source>
</reference>
<reference key="3">
    <citation type="submission" date="2007-04" db="EMBL/GenBank/DDBJ databases">
        <title>Complete genome sequence of Burkholderia multivorans ATCC 17616.</title>
        <authorList>
            <person name="Ohtsubo Y."/>
            <person name="Yamashita A."/>
            <person name="Kurokawa K."/>
            <person name="Takami H."/>
            <person name="Yuhara S."/>
            <person name="Nishiyama E."/>
            <person name="Endo R."/>
            <person name="Miyazaki R."/>
            <person name="Ono A."/>
            <person name="Yano K."/>
            <person name="Ito M."/>
            <person name="Sota M."/>
            <person name="Yuji N."/>
            <person name="Hattori M."/>
            <person name="Tsuda M."/>
        </authorList>
    </citation>
    <scope>NUCLEOTIDE SEQUENCE [LARGE SCALE GENOMIC DNA]</scope>
    <source>
        <strain>ATCC 17616 / 249</strain>
    </source>
</reference>
<accession>P59615</accession>
<accession>A9AHK6</accession>
<accession>B3D2M5</accession>
<name>ARLY_BURM1</name>